<keyword id="KW-0175">Coiled coil</keyword>
<keyword id="KW-0574">Periplasm</keyword>
<keyword id="KW-1185">Reference proteome</keyword>
<keyword id="KW-0732">Signal</keyword>
<comment type="subcellular location">
    <subcellularLocation>
        <location evidence="1">Periplasm</location>
    </subcellularLocation>
</comment>
<comment type="similarity">
    <text evidence="1">Belongs to the UPF0194 family.</text>
</comment>
<proteinExistence type="inferred from homology"/>
<accession>A9MIT3</accession>
<gene>
    <name evidence="1" type="primary">ybhG</name>
    <name type="ordered locus">SARI_02109</name>
</gene>
<protein>
    <recommendedName>
        <fullName evidence="1">UPF0194 membrane protein YbhG</fullName>
    </recommendedName>
</protein>
<name>YBHG_SALAR</name>
<reference key="1">
    <citation type="submission" date="2007-11" db="EMBL/GenBank/DDBJ databases">
        <authorList>
            <consortium name="The Salmonella enterica serovar Arizonae Genome Sequencing Project"/>
            <person name="McClelland M."/>
            <person name="Sanderson E.K."/>
            <person name="Porwollik S."/>
            <person name="Spieth J."/>
            <person name="Clifton W.S."/>
            <person name="Fulton R."/>
            <person name="Chunyan W."/>
            <person name="Wollam A."/>
            <person name="Shah N."/>
            <person name="Pepin K."/>
            <person name="Bhonagiri V."/>
            <person name="Nash W."/>
            <person name="Johnson M."/>
            <person name="Thiruvilangam P."/>
            <person name="Wilson R."/>
        </authorList>
    </citation>
    <scope>NUCLEOTIDE SEQUENCE [LARGE SCALE GENOMIC DNA]</scope>
    <source>
        <strain>ATCC BAA-731 / CDC346-86 / RSK2980</strain>
    </source>
</reference>
<dbReference type="EMBL" id="CP000880">
    <property type="protein sequence ID" value="ABX21986.1"/>
    <property type="molecule type" value="Genomic_DNA"/>
</dbReference>
<dbReference type="SMR" id="A9MIT3"/>
<dbReference type="STRING" id="41514.SARI_02109"/>
<dbReference type="KEGG" id="ses:SARI_02109"/>
<dbReference type="HOGENOM" id="CLU_018816_6_3_6"/>
<dbReference type="Proteomes" id="UP000002084">
    <property type="component" value="Chromosome"/>
</dbReference>
<dbReference type="GO" id="GO:0042597">
    <property type="term" value="C:periplasmic space"/>
    <property type="evidence" value="ECO:0007669"/>
    <property type="project" value="UniProtKB-SubCell"/>
</dbReference>
<dbReference type="FunFam" id="1.10.287.470:FF:000004">
    <property type="entry name" value="UPF0194 membrane protein YbhG"/>
    <property type="match status" value="1"/>
</dbReference>
<dbReference type="FunFam" id="2.40.50.100:FF:000025">
    <property type="entry name" value="UPF0194 membrane protein YbhG"/>
    <property type="match status" value="1"/>
</dbReference>
<dbReference type="Gene3D" id="2.40.30.170">
    <property type="match status" value="1"/>
</dbReference>
<dbReference type="Gene3D" id="2.40.50.100">
    <property type="match status" value="2"/>
</dbReference>
<dbReference type="Gene3D" id="1.10.287.470">
    <property type="entry name" value="Helix hairpin bin"/>
    <property type="match status" value="1"/>
</dbReference>
<dbReference type="HAMAP" id="MF_01304">
    <property type="entry name" value="UPF0194"/>
    <property type="match status" value="1"/>
</dbReference>
<dbReference type="InterPro" id="IPR032317">
    <property type="entry name" value="CusB_D23"/>
</dbReference>
<dbReference type="InterPro" id="IPR022936">
    <property type="entry name" value="UPF0194_membrane_YbhG"/>
</dbReference>
<dbReference type="InterPro" id="IPR050465">
    <property type="entry name" value="UPF0194_transport"/>
</dbReference>
<dbReference type="NCBIfam" id="NF002939">
    <property type="entry name" value="PRK03598.1"/>
    <property type="match status" value="1"/>
</dbReference>
<dbReference type="PANTHER" id="PTHR32347">
    <property type="entry name" value="EFFLUX SYSTEM COMPONENT YKNX-RELATED"/>
    <property type="match status" value="1"/>
</dbReference>
<dbReference type="PANTHER" id="PTHR32347:SF29">
    <property type="entry name" value="UPF0194 MEMBRANE PROTEIN YBHG"/>
    <property type="match status" value="1"/>
</dbReference>
<dbReference type="Pfam" id="PF16576">
    <property type="entry name" value="HlyD_D23"/>
    <property type="match status" value="1"/>
</dbReference>
<dbReference type="SUPFAM" id="SSF111369">
    <property type="entry name" value="HlyD-like secretion proteins"/>
    <property type="match status" value="3"/>
</dbReference>
<sequence length="331" mass="36371">MKKPVVIGLAIAAIVTVIAGGTWWYQSRQDDGLTLYGNVDIRTVNISFRVGGRLASLNVDEGDTIKAGQVLGELDHAPYENALMQAKAGVSVAQAQYDLMLAGYRDEEIAQAAAAVRQAQAAYDYAQNFYNRQQGLWKSRTISANDLENARSSRDQAQATLKSAQDKLSQYRTGNREQDIAQAKASLEQAKAQLAQAQLDLQDTTLIAPSNGTLLTRAVEPGSMLNAGSTVLTLSLTRPVWVRAYVDERNLSQTQPGREILLYTDGRPDKPYHGKIGFVSPTAEFTPKTVETPDLRTDLVYRLRIIVTDADDALRQGMPVTVKFNDEARHE</sequence>
<organism>
    <name type="scientific">Salmonella arizonae (strain ATCC BAA-731 / CDC346-86 / RSK2980)</name>
    <dbReference type="NCBI Taxonomy" id="41514"/>
    <lineage>
        <taxon>Bacteria</taxon>
        <taxon>Pseudomonadati</taxon>
        <taxon>Pseudomonadota</taxon>
        <taxon>Gammaproteobacteria</taxon>
        <taxon>Enterobacterales</taxon>
        <taxon>Enterobacteriaceae</taxon>
        <taxon>Salmonella</taxon>
    </lineage>
</organism>
<feature type="signal peptide" evidence="1">
    <location>
        <begin position="1"/>
        <end position="19"/>
    </location>
</feature>
<feature type="chain" id="PRO_1000085955" description="UPF0194 membrane protein YbhG">
    <location>
        <begin position="20"/>
        <end position="331"/>
    </location>
</feature>
<feature type="coiled-coil region" evidence="1">
    <location>
        <begin position="107"/>
        <end position="208"/>
    </location>
</feature>
<evidence type="ECO:0000255" key="1">
    <source>
        <dbReference type="HAMAP-Rule" id="MF_01304"/>
    </source>
</evidence>